<reference key="1">
    <citation type="journal article" date="2009" name="PLoS Genet.">
        <title>Organised genome dynamics in the Escherichia coli species results in highly diverse adaptive paths.</title>
        <authorList>
            <person name="Touchon M."/>
            <person name="Hoede C."/>
            <person name="Tenaillon O."/>
            <person name="Barbe V."/>
            <person name="Baeriswyl S."/>
            <person name="Bidet P."/>
            <person name="Bingen E."/>
            <person name="Bonacorsi S."/>
            <person name="Bouchier C."/>
            <person name="Bouvet O."/>
            <person name="Calteau A."/>
            <person name="Chiapello H."/>
            <person name="Clermont O."/>
            <person name="Cruveiller S."/>
            <person name="Danchin A."/>
            <person name="Diard M."/>
            <person name="Dossat C."/>
            <person name="Karoui M.E."/>
            <person name="Frapy E."/>
            <person name="Garry L."/>
            <person name="Ghigo J.M."/>
            <person name="Gilles A.M."/>
            <person name="Johnson J."/>
            <person name="Le Bouguenec C."/>
            <person name="Lescat M."/>
            <person name="Mangenot S."/>
            <person name="Martinez-Jehanne V."/>
            <person name="Matic I."/>
            <person name="Nassif X."/>
            <person name="Oztas S."/>
            <person name="Petit M.A."/>
            <person name="Pichon C."/>
            <person name="Rouy Z."/>
            <person name="Ruf C.S."/>
            <person name="Schneider D."/>
            <person name="Tourret J."/>
            <person name="Vacherie B."/>
            <person name="Vallenet D."/>
            <person name="Medigue C."/>
            <person name="Rocha E.P.C."/>
            <person name="Denamur E."/>
        </authorList>
    </citation>
    <scope>NUCLEOTIDE SEQUENCE [LARGE SCALE GENOMIC DNA]</scope>
    <source>
        <strain>UMN026 / ExPEC</strain>
    </source>
</reference>
<proteinExistence type="inferred from homology"/>
<sequence length="300" mass="32927">MNQSYGRLVSRAAIAATAMASLLLLIKIFAWWYTGSVSILAALVDSLVDIGASLTNLLVVRYSLQPADDNHSFGHGKAESLAALAQSMFISGSALFLFLTGIQHLISPTPMTDPGVGVIVTIVALICTIILVSFQRWVVRRTQSQAVRADMLHYQSDVMMNGAILLALGLSWYGWHRADALFALGIGIYILYSALRMGYEAVQSLLDRALPDEERQEIIDIVTSWPGVSGAHDLRTRQSGPTRFIQIHLEMEDSLPLVQAHMVADQVEQAILRRFPGSDVIIHQDPCSVVPREGKRSMLS</sequence>
<evidence type="ECO:0000255" key="1">
    <source>
        <dbReference type="HAMAP-Rule" id="MF_01425"/>
    </source>
</evidence>
<accession>B7NFL2</accession>
<comment type="function">
    <text evidence="1">Divalent metal cation transporter which exports Zn(2+), Cd(2+) and possibly Fe(2+). May be involved in zinc and iron detoxification by efflux.</text>
</comment>
<comment type="catalytic activity">
    <reaction evidence="1">
        <text>Zn(2+)(in) + H(+)(out) = Zn(2+)(out) + H(+)(in)</text>
        <dbReference type="Rhea" id="RHEA:28839"/>
        <dbReference type="ChEBI" id="CHEBI:15378"/>
        <dbReference type="ChEBI" id="CHEBI:29105"/>
    </reaction>
</comment>
<comment type="catalytic activity">
    <reaction evidence="1">
        <text>Cd(2+)(in) + H(+)(out) = Cd(2+)(out) + H(+)(in)</text>
        <dbReference type="Rhea" id="RHEA:28739"/>
        <dbReference type="ChEBI" id="CHEBI:15378"/>
        <dbReference type="ChEBI" id="CHEBI:48775"/>
    </reaction>
</comment>
<comment type="catalytic activity">
    <reaction evidence="1">
        <text>Fe(2+)(in) + H(+)(out) = Fe(2+)(out) + H(+)(in)</text>
        <dbReference type="Rhea" id="RHEA:29439"/>
        <dbReference type="ChEBI" id="CHEBI:15378"/>
        <dbReference type="ChEBI" id="CHEBI:29033"/>
    </reaction>
</comment>
<comment type="subunit">
    <text evidence="1">Homodimer.</text>
</comment>
<comment type="subcellular location">
    <subcellularLocation>
        <location evidence="1">Cell inner membrane</location>
        <topology evidence="1">Multi-pass membrane protein</topology>
    </subcellularLocation>
</comment>
<comment type="similarity">
    <text evidence="1">Belongs to the cation diffusion facilitator (CDF) transporter (TC 2.A.4) family. FieF subfamily.</text>
</comment>
<feature type="chain" id="PRO_1000145694" description="Cation-efflux pump FieF">
    <location>
        <begin position="1"/>
        <end position="300"/>
    </location>
</feature>
<feature type="transmembrane region" description="Helical" evidence="1">
    <location>
        <begin position="12"/>
        <end position="32"/>
    </location>
</feature>
<feature type="transmembrane region" description="Helical" evidence="1">
    <location>
        <begin position="39"/>
        <end position="59"/>
    </location>
</feature>
<feature type="transmembrane region" description="Helical" evidence="1">
    <location>
        <begin position="82"/>
        <end position="102"/>
    </location>
</feature>
<feature type="transmembrane region" description="Helical" evidence="1">
    <location>
        <begin position="114"/>
        <end position="134"/>
    </location>
</feature>
<feature type="transmembrane region" description="Helical" evidence="1">
    <location>
        <begin position="156"/>
        <end position="176"/>
    </location>
</feature>
<feature type="transmembrane region" description="Helical" evidence="1">
    <location>
        <begin position="178"/>
        <end position="198"/>
    </location>
</feature>
<feature type="binding site" evidence="1">
    <location>
        <position position="45"/>
    </location>
    <ligand>
        <name>Zn(2+)</name>
        <dbReference type="ChEBI" id="CHEBI:29105"/>
    </ligand>
</feature>
<feature type="binding site" evidence="1">
    <location>
        <position position="49"/>
    </location>
    <ligand>
        <name>Zn(2+)</name>
        <dbReference type="ChEBI" id="CHEBI:29105"/>
    </ligand>
</feature>
<feature type="binding site" evidence="1">
    <location>
        <position position="153"/>
    </location>
    <ligand>
        <name>Zn(2+)</name>
        <dbReference type="ChEBI" id="CHEBI:29105"/>
    </ligand>
</feature>
<feature type="binding site" evidence="1">
    <location>
        <position position="157"/>
    </location>
    <ligand>
        <name>Zn(2+)</name>
        <dbReference type="ChEBI" id="CHEBI:29105"/>
    </ligand>
</feature>
<gene>
    <name evidence="1" type="primary">fieF</name>
    <name type="ordered locus">ECUMN_4443</name>
</gene>
<organism>
    <name type="scientific">Escherichia coli O17:K52:H18 (strain UMN026 / ExPEC)</name>
    <dbReference type="NCBI Taxonomy" id="585056"/>
    <lineage>
        <taxon>Bacteria</taxon>
        <taxon>Pseudomonadati</taxon>
        <taxon>Pseudomonadota</taxon>
        <taxon>Gammaproteobacteria</taxon>
        <taxon>Enterobacterales</taxon>
        <taxon>Enterobacteriaceae</taxon>
        <taxon>Escherichia</taxon>
    </lineage>
</organism>
<protein>
    <recommendedName>
        <fullName evidence="1">Cation-efflux pump FieF</fullName>
    </recommendedName>
</protein>
<dbReference type="EMBL" id="CU928163">
    <property type="protein sequence ID" value="CAR15569.1"/>
    <property type="molecule type" value="Genomic_DNA"/>
</dbReference>
<dbReference type="RefSeq" id="WP_001076742.1">
    <property type="nucleotide sequence ID" value="NC_011751.1"/>
</dbReference>
<dbReference type="RefSeq" id="YP_002415058.1">
    <property type="nucleotide sequence ID" value="NC_011751.1"/>
</dbReference>
<dbReference type="SMR" id="B7NFL2"/>
<dbReference type="STRING" id="585056.ECUMN_4443"/>
<dbReference type="GeneID" id="75204588"/>
<dbReference type="KEGG" id="eum:ECUMN_4443"/>
<dbReference type="PATRIC" id="fig|585056.7.peg.4612"/>
<dbReference type="HOGENOM" id="CLU_013430_3_0_6"/>
<dbReference type="Proteomes" id="UP000007097">
    <property type="component" value="Chromosome"/>
</dbReference>
<dbReference type="GO" id="GO:0005886">
    <property type="term" value="C:plasma membrane"/>
    <property type="evidence" value="ECO:0007669"/>
    <property type="project" value="UniProtKB-SubCell"/>
</dbReference>
<dbReference type="GO" id="GO:0015086">
    <property type="term" value="F:cadmium ion transmembrane transporter activity"/>
    <property type="evidence" value="ECO:0007669"/>
    <property type="project" value="UniProtKB-UniRule"/>
</dbReference>
<dbReference type="GO" id="GO:0015093">
    <property type="term" value="F:ferrous iron transmembrane transporter activity"/>
    <property type="evidence" value="ECO:0007669"/>
    <property type="project" value="TreeGrafter"/>
</dbReference>
<dbReference type="GO" id="GO:0046872">
    <property type="term" value="F:metal ion binding"/>
    <property type="evidence" value="ECO:0007669"/>
    <property type="project" value="UniProtKB-KW"/>
</dbReference>
<dbReference type="GO" id="GO:0015341">
    <property type="term" value="F:zinc efflux antiporter activity"/>
    <property type="evidence" value="ECO:0007669"/>
    <property type="project" value="TreeGrafter"/>
</dbReference>
<dbReference type="GO" id="GO:0006882">
    <property type="term" value="P:intracellular zinc ion homeostasis"/>
    <property type="evidence" value="ECO:0007669"/>
    <property type="project" value="TreeGrafter"/>
</dbReference>
<dbReference type="FunFam" id="1.20.1510.10:FF:000001">
    <property type="entry name" value="Ferrous-iron efflux pump FieF"/>
    <property type="match status" value="1"/>
</dbReference>
<dbReference type="FunFam" id="3.30.70.1350:FF:000002">
    <property type="entry name" value="Ferrous-iron efflux pump FieF"/>
    <property type="match status" value="1"/>
</dbReference>
<dbReference type="Gene3D" id="1.20.1510.10">
    <property type="entry name" value="Cation efflux protein transmembrane domain"/>
    <property type="match status" value="1"/>
</dbReference>
<dbReference type="Gene3D" id="3.30.70.1350">
    <property type="entry name" value="Cation efflux protein, cytoplasmic domain"/>
    <property type="match status" value="1"/>
</dbReference>
<dbReference type="HAMAP" id="MF_01425">
    <property type="entry name" value="Cation_efflux_FieF"/>
    <property type="match status" value="1"/>
</dbReference>
<dbReference type="InterPro" id="IPR002524">
    <property type="entry name" value="Cation_efflux"/>
</dbReference>
<dbReference type="InterPro" id="IPR027470">
    <property type="entry name" value="Cation_efflux_CTD"/>
</dbReference>
<dbReference type="InterPro" id="IPR036837">
    <property type="entry name" value="Cation_efflux_CTD_sf"/>
</dbReference>
<dbReference type="InterPro" id="IPR023783">
    <property type="entry name" value="Cation_efflux_FieF"/>
</dbReference>
<dbReference type="InterPro" id="IPR027469">
    <property type="entry name" value="Cation_efflux_TMD_sf"/>
</dbReference>
<dbReference type="InterPro" id="IPR050291">
    <property type="entry name" value="CDF_Transporter"/>
</dbReference>
<dbReference type="NCBIfam" id="TIGR01297">
    <property type="entry name" value="CDF"/>
    <property type="match status" value="1"/>
</dbReference>
<dbReference type="NCBIfam" id="NF007064">
    <property type="entry name" value="PRK09509.1"/>
    <property type="match status" value="1"/>
</dbReference>
<dbReference type="PANTHER" id="PTHR43840:SF41">
    <property type="entry name" value="CATION-EFFLUX PUMP FIEF"/>
    <property type="match status" value="1"/>
</dbReference>
<dbReference type="PANTHER" id="PTHR43840">
    <property type="entry name" value="MITOCHONDRIAL METAL TRANSPORTER 1-RELATED"/>
    <property type="match status" value="1"/>
</dbReference>
<dbReference type="Pfam" id="PF01545">
    <property type="entry name" value="Cation_efflux"/>
    <property type="match status" value="1"/>
</dbReference>
<dbReference type="Pfam" id="PF16916">
    <property type="entry name" value="ZT_dimer"/>
    <property type="match status" value="1"/>
</dbReference>
<dbReference type="SUPFAM" id="SSF160240">
    <property type="entry name" value="Cation efflux protein cytoplasmic domain-like"/>
    <property type="match status" value="1"/>
</dbReference>
<dbReference type="SUPFAM" id="SSF161111">
    <property type="entry name" value="Cation efflux protein transmembrane domain-like"/>
    <property type="match status" value="1"/>
</dbReference>
<keyword id="KW-0997">Cell inner membrane</keyword>
<keyword id="KW-1003">Cell membrane</keyword>
<keyword id="KW-0406">Ion transport</keyword>
<keyword id="KW-0408">Iron</keyword>
<keyword id="KW-0410">Iron transport</keyword>
<keyword id="KW-0472">Membrane</keyword>
<keyword id="KW-0479">Metal-binding</keyword>
<keyword id="KW-0812">Transmembrane</keyword>
<keyword id="KW-1133">Transmembrane helix</keyword>
<keyword id="KW-0813">Transport</keyword>
<keyword id="KW-0862">Zinc</keyword>
<keyword id="KW-0864">Zinc transport</keyword>
<name>FIEF_ECOLU</name>